<reference key="1">
    <citation type="journal article" date="2005" name="Nature">
        <title>The map-based sequence of the rice genome.</title>
        <authorList>
            <consortium name="International rice genome sequencing project (IRGSP)"/>
        </authorList>
    </citation>
    <scope>NUCLEOTIDE SEQUENCE [LARGE SCALE GENOMIC DNA]</scope>
    <source>
        <strain>cv. Nipponbare</strain>
    </source>
</reference>
<reference key="2">
    <citation type="journal article" date="2008" name="Nucleic Acids Res.">
        <title>The rice annotation project database (RAP-DB): 2008 update.</title>
        <authorList>
            <consortium name="The rice annotation project (RAP)"/>
        </authorList>
    </citation>
    <scope>GENOME REANNOTATION</scope>
    <source>
        <strain>cv. Nipponbare</strain>
    </source>
</reference>
<reference key="3">
    <citation type="journal article" date="2013" name="Rice">
        <title>Improvement of the Oryza sativa Nipponbare reference genome using next generation sequence and optical map data.</title>
        <authorList>
            <person name="Kawahara Y."/>
            <person name="de la Bastide M."/>
            <person name="Hamilton J.P."/>
            <person name="Kanamori H."/>
            <person name="McCombie W.R."/>
            <person name="Ouyang S."/>
            <person name="Schwartz D.C."/>
            <person name="Tanaka T."/>
            <person name="Wu J."/>
            <person name="Zhou S."/>
            <person name="Childs K.L."/>
            <person name="Davidson R.M."/>
            <person name="Lin H."/>
            <person name="Quesada-Ocampo L."/>
            <person name="Vaillancourt B."/>
            <person name="Sakai H."/>
            <person name="Lee S.S."/>
            <person name="Kim J."/>
            <person name="Numa H."/>
            <person name="Itoh T."/>
            <person name="Buell C.R."/>
            <person name="Matsumoto T."/>
        </authorList>
    </citation>
    <scope>GENOME REANNOTATION</scope>
    <source>
        <strain>cv. Nipponbare</strain>
    </source>
</reference>
<reference key="4">
    <citation type="journal article" date="2017" name="Plant Sci.">
        <title>OsMYB45 plays an important role in rice resistance to cadmium stress.</title>
        <authorList>
            <person name="Hu S."/>
            <person name="Yu Y."/>
            <person name="Chen Q."/>
            <person name="Mu G."/>
            <person name="Shen Z."/>
            <person name="Zheng L."/>
        </authorList>
    </citation>
    <scope>SUBCELLULAR LOCATION</scope>
    <scope>INDUCTION BY CADMIUM</scope>
    <scope>DISRUPTION PHENOTYPE</scope>
</reference>
<reference key="5">
    <citation type="journal article" date="2017" name="PLoS ONE">
        <title>OsMPH1 regulates plant height and improves grain yield in rice.</title>
        <authorList>
            <person name="Zhang Y."/>
            <person name="Yu C."/>
            <person name="Lin J."/>
            <person name="Liu J."/>
            <person name="Liu B."/>
            <person name="Wang J."/>
            <person name="Huang A."/>
            <person name="Li H."/>
            <person name="Zhao T."/>
        </authorList>
    </citation>
    <scope>FUNCTION</scope>
    <scope>SUBCELLULAR LOCATION</scope>
    <scope>TISSUE SPECIFICITY</scope>
</reference>
<protein>
    <recommendedName>
        <fullName evidence="6">Myb family transcription factor MPH1</fullName>
    </recommendedName>
    <alternativeName>
        <fullName evidence="5">Myb transcription factor 45</fullName>
        <shortName evidence="5">OsMYB45</shortName>
    </alternativeName>
    <alternativeName>
        <fullName evidence="4">Protein MYB-LIKE GENE OF PLANT HEIGHT 1</fullName>
        <shortName evidence="4">OsMPH1</shortName>
    </alternativeName>
</protein>
<organism>
    <name type="scientific">Oryza sativa subsp. japonica</name>
    <name type="common">Rice</name>
    <dbReference type="NCBI Taxonomy" id="39947"/>
    <lineage>
        <taxon>Eukaryota</taxon>
        <taxon>Viridiplantae</taxon>
        <taxon>Streptophyta</taxon>
        <taxon>Embryophyta</taxon>
        <taxon>Tracheophyta</taxon>
        <taxon>Spermatophyta</taxon>
        <taxon>Magnoliopsida</taxon>
        <taxon>Liliopsida</taxon>
        <taxon>Poales</taxon>
        <taxon>Poaceae</taxon>
        <taxon>BOP clade</taxon>
        <taxon>Oryzoideae</taxon>
        <taxon>Oryzeae</taxon>
        <taxon>Oryzinae</taxon>
        <taxon>Oryza</taxon>
        <taxon>Oryza sativa</taxon>
    </lineage>
</organism>
<feature type="chain" id="PRO_0000451253" description="Myb family transcription factor MPH1">
    <location>
        <begin position="1"/>
        <end position="256"/>
    </location>
</feature>
<feature type="domain" description="HTH myb-type" evidence="1">
    <location>
        <begin position="14"/>
        <end position="74"/>
    </location>
</feature>
<feature type="DNA-binding region" description="H-T-H motif" evidence="1">
    <location>
        <begin position="45"/>
        <end position="70"/>
    </location>
</feature>
<gene>
    <name evidence="4" type="primary">MPH1</name>
    <name evidence="5" type="synonym">MYB45</name>
    <name evidence="9" type="ordered locus">Os06g0670300</name>
    <name evidence="6" type="ordered locus">LOC_Os06g45890</name>
    <name evidence="8" type="ORF">P0485A07.2</name>
    <name evidence="7" type="ORF">P0686E06.38</name>
</gene>
<dbReference type="EMBL" id="AP003635">
    <property type="protein sequence ID" value="BAD45453.1"/>
    <property type="molecule type" value="Genomic_DNA"/>
</dbReference>
<dbReference type="EMBL" id="AP005192">
    <property type="protein sequence ID" value="BAD45989.1"/>
    <property type="molecule type" value="Genomic_DNA"/>
</dbReference>
<dbReference type="EMBL" id="AP008212">
    <property type="protein sequence ID" value="BAF20242.1"/>
    <property type="molecule type" value="Genomic_DNA"/>
</dbReference>
<dbReference type="EMBL" id="AP014962">
    <property type="protein sequence ID" value="BAS99069.1"/>
    <property type="molecule type" value="Genomic_DNA"/>
</dbReference>
<dbReference type="RefSeq" id="XP_015641452.1">
    <property type="nucleotide sequence ID" value="XM_015785966.1"/>
</dbReference>
<dbReference type="SMR" id="A0A0P0X0C0"/>
<dbReference type="FunCoup" id="A0A0P0X0C0">
    <property type="interactions" value="58"/>
</dbReference>
<dbReference type="STRING" id="39947.Q653M8"/>
<dbReference type="PaxDb" id="39947-Q653M8"/>
<dbReference type="EnsemblPlants" id="Os06t0670300-01">
    <property type="protein sequence ID" value="Os06t0670300-01"/>
    <property type="gene ID" value="Os06g0670300"/>
</dbReference>
<dbReference type="Gramene" id="Os06t0670300-01">
    <property type="protein sequence ID" value="Os06t0670300-01"/>
    <property type="gene ID" value="Os06g0670300"/>
</dbReference>
<dbReference type="KEGG" id="dosa:Os06g0670300"/>
<dbReference type="eggNOG" id="ENOG502S6PK">
    <property type="taxonomic scope" value="Eukaryota"/>
</dbReference>
<dbReference type="HOGENOM" id="CLU_062113_3_0_1"/>
<dbReference type="InParanoid" id="A0A0P0X0C0"/>
<dbReference type="OMA" id="FRNWEQS"/>
<dbReference type="OrthoDB" id="551907at2759"/>
<dbReference type="PlantReactome" id="R-OSA-9826782">
    <property type="pathway name" value="Regulation of seed germination and coleoptile growth under submergence and normal gravity environment"/>
</dbReference>
<dbReference type="Proteomes" id="UP000000763">
    <property type="component" value="Chromosome 6"/>
</dbReference>
<dbReference type="Proteomes" id="UP000059680">
    <property type="component" value="Chromosome 6"/>
</dbReference>
<dbReference type="GO" id="GO:0005634">
    <property type="term" value="C:nucleus"/>
    <property type="evidence" value="ECO:0007669"/>
    <property type="project" value="UniProtKB-SubCell"/>
</dbReference>
<dbReference type="GO" id="GO:0003677">
    <property type="term" value="F:DNA binding"/>
    <property type="evidence" value="ECO:0007669"/>
    <property type="project" value="UniProtKB-KW"/>
</dbReference>
<dbReference type="GO" id="GO:0003700">
    <property type="term" value="F:DNA-binding transcription factor activity"/>
    <property type="evidence" value="ECO:0007669"/>
    <property type="project" value="InterPro"/>
</dbReference>
<dbReference type="FunFam" id="1.10.10.60:FF:000007">
    <property type="entry name" value="Two-component response regulator"/>
    <property type="match status" value="1"/>
</dbReference>
<dbReference type="Gene3D" id="1.10.10.60">
    <property type="entry name" value="Homeodomain-like"/>
    <property type="match status" value="1"/>
</dbReference>
<dbReference type="InterPro" id="IPR009057">
    <property type="entry name" value="Homeodomain-like_sf"/>
</dbReference>
<dbReference type="InterPro" id="IPR017930">
    <property type="entry name" value="Myb_dom"/>
</dbReference>
<dbReference type="InterPro" id="IPR006447">
    <property type="entry name" value="Myb_dom_plants"/>
</dbReference>
<dbReference type="InterPro" id="IPR046955">
    <property type="entry name" value="PHR1-like"/>
</dbReference>
<dbReference type="InterPro" id="IPR001005">
    <property type="entry name" value="SANT/Myb"/>
</dbReference>
<dbReference type="NCBIfam" id="TIGR01557">
    <property type="entry name" value="myb_SHAQKYF"/>
    <property type="match status" value="1"/>
</dbReference>
<dbReference type="PANTHER" id="PTHR31314:SF113">
    <property type="entry name" value="MYB FAMILY TRANSCRIPTION FACTOR MPH1"/>
    <property type="match status" value="1"/>
</dbReference>
<dbReference type="PANTHER" id="PTHR31314">
    <property type="entry name" value="MYB FAMILY TRANSCRIPTION FACTOR PHL7-LIKE"/>
    <property type="match status" value="1"/>
</dbReference>
<dbReference type="Pfam" id="PF00249">
    <property type="entry name" value="Myb_DNA-binding"/>
    <property type="match status" value="1"/>
</dbReference>
<dbReference type="SUPFAM" id="SSF46689">
    <property type="entry name" value="Homeodomain-like"/>
    <property type="match status" value="1"/>
</dbReference>
<dbReference type="PROSITE" id="PS51294">
    <property type="entry name" value="HTH_MYB"/>
    <property type="match status" value="1"/>
</dbReference>
<comment type="function">
    <text evidence="2 3">Probable transcription factor involved in the regulation of plant height by elongating internode cell length (PubMed:28708834). Involved in the positive regulation of grain yield (PubMed:28708834). May be involved in the regulation of genes related to cell elongation and cell wall synthesis, which are associated with plant height and yield phenotypes (PubMed:28708834). Plays a role in tolerance to cadmium stress (PubMed:28969789).</text>
</comment>
<comment type="subcellular location">
    <subcellularLocation>
        <location evidence="1 2 3">Nucleus</location>
    </subcellularLocation>
</comment>
<comment type="tissue specificity">
    <text evidence="2">Highly expressed in the pulvinus and stem nodes (PubMed:28708834). Expressed in the plumule of germinating seeds, coleoptile, leaves, internodes, leave sheaths, spikes and roots (PubMed:28708834).</text>
</comment>
<comment type="induction">
    <text evidence="3">Induced by cadmium in roots.</text>
</comment>
<comment type="disruption phenotype">
    <text evidence="3">Increased sensitivity to cadmium stress and increased accumulation of hydrogen peroxide in leaves upon cadmium treatment.</text>
</comment>
<comment type="miscellaneous">
    <text evidence="2">Plants overexpressing MPH1 exhibit increased plant height due to increased length of internodes (PubMed:28708834). Plants overexpressing MPH1 exhibit increased grain yield (PubMed:28708834). Plant silencing MPH1 exhibit decreased plant height due to decreased length of internodes (PubMed:28708834). Plants silencing MPH1 exhibit decreased grain yield (PubMed:28708834).</text>
</comment>
<proteinExistence type="evidence at transcript level"/>
<evidence type="ECO:0000255" key="1">
    <source>
        <dbReference type="PROSITE-ProRule" id="PRU00625"/>
    </source>
</evidence>
<evidence type="ECO:0000269" key="2">
    <source>
    </source>
</evidence>
<evidence type="ECO:0000269" key="3">
    <source>
    </source>
</evidence>
<evidence type="ECO:0000303" key="4">
    <source>
    </source>
</evidence>
<evidence type="ECO:0000303" key="5">
    <source>
    </source>
</evidence>
<evidence type="ECO:0000305" key="6"/>
<evidence type="ECO:0000312" key="7">
    <source>
        <dbReference type="EMBL" id="BAD45453.1"/>
    </source>
</evidence>
<evidence type="ECO:0000312" key="8">
    <source>
        <dbReference type="EMBL" id="BAD45989.1"/>
    </source>
</evidence>
<evidence type="ECO:0000312" key="9">
    <source>
        <dbReference type="EMBL" id="BAF20242.1"/>
    </source>
</evidence>
<sequence>MGGFERRGVRQYNRSEVPRMRWTEEMHRQFVEAVECLGGQDEATPKRILQLMGVKGVSISHIKSHLQMYRSGSSNSNHPVSLQKLTSATVNNISKREFVNSEDRCIYASGDRNTASSDKNTYTILRCGRSSMPSIEEIFRNWEQTRGRLLPWNSNVITTEQATTRASRQTTNYSKPLKQLTDCDLTLSIGQLWDDAAGSDADGSSTISEEVAAPSRDEAFVSSADDHFAAAAAKKESNMLTTDLNLDLTISSSWLS</sequence>
<name>MPH1_ORYSJ</name>
<keyword id="KW-0238">DNA-binding</keyword>
<keyword id="KW-0539">Nucleus</keyword>
<keyword id="KW-1185">Reference proteome</keyword>
<keyword id="KW-0346">Stress response</keyword>
<keyword id="KW-0804">Transcription</keyword>
<keyword id="KW-0805">Transcription regulation</keyword>
<accession>A0A0P0X0C0</accession>
<accession>Q653M8</accession>